<proteinExistence type="evidence at protein level"/>
<keyword id="KW-0002">3D-structure</keyword>
<keyword id="KW-0007">Acetylation</keyword>
<keyword id="KW-0963">Cytoplasm</keyword>
<keyword id="KW-0903">Direct protein sequencing</keyword>
<keyword id="KW-0251">Elongation factor</keyword>
<keyword id="KW-0342">GTP-binding</keyword>
<keyword id="KW-0378">Hydrolase</keyword>
<keyword id="KW-1017">Isopeptide bond</keyword>
<keyword id="KW-0488">Methylation</keyword>
<keyword id="KW-0547">Nucleotide-binding</keyword>
<keyword id="KW-0539">Nucleus</keyword>
<keyword id="KW-0597">Phosphoprotein</keyword>
<keyword id="KW-0648">Protein biosynthesis</keyword>
<keyword id="KW-1185">Reference proteome</keyword>
<keyword id="KW-0832">Ubl conjugation</keyword>
<sequence length="857" mass="95281">MVNFTVDQIRAIMDKKANIRNMSVIAHVDHGKSTLTDSLVCKAGIIASARAGETRFTDTRKDEQERCITIKSTAISLFYELSENDLNFIKQSKDGAGFLINLIDSPGHVDFSSEVTAALRVTDGALVVVDCVSGVCVQTETVLRQAIAERIKPVLMMNKMDRALLELQLEPEELYQTFQRIVENVNVIISTYGEGESGPMGNIMIDPVLGTVGFGSGLHGWAFTLKQFAEMYVAKFAAKGEGQLGPAERAKKVEDMMKKLWGDRYFDPANGKFSKSATSPEGKKLPRTFCQLILDPIFKVFDAIMNFKKEETAKLIEKLDIKLDSEDKDKEGKPLLKAVMRRWLPAGDALLQMITIHLPSPVTAQKYRCELLYEGPPDDEAAMGIKSCDPKGPLMMYISKMVPTSDKGRFYAFGRVFSGLVSTGLKVRIMGPNYTPGKKEDLYLKPIQRTILMMGRYVEPIEDVPCGNIVGLVGVDQFLVKTGTITTFEHAHNMRVMKFSVSPVVRVAVEAKNPADLPKLVEGLKRLAKSDPMVQCIIEESGEHIIAGAGELHLEICLKDLEEDHACIPIKKSDPVVSYRETVSEESNVLCLSKSPNKHNRLYMKARPFPDGLAEDIDKGEVSARQELKQRARYLAEKYEWDVAEARKIWCFGPDGTGPNILTDITKGVQYLNEIKDSVVAGFQWATKEGALCEENMRGVRFDVHDVTLHADAIHRGGGQIIPTARRCLYASVLTAQPRLMEPIYLVEIQCPEQVVGGIYGVLNRKRGHVFEESQVAGTPMFVVKAYLPVNESFGFTADLRSNTGGQAFPQCVFDHWQILPGDPFDNSSRPSQVVAETRKRKGLKEIPALDNFLDKL</sequence>
<comment type="function">
    <text evidence="6 8">Catalyzes the GTP-dependent ribosomal translocation step during translation elongation (PubMed:29453282, PubMed:30517857). During this step, the ribosome changes from the pre-translocational (PRE) to the post-translocational (POST) state as the newly formed A-site-bound peptidyl-tRNA and P-site-bound deacylated tRNA move to the P and E sites, respectively (PubMed:30517857). Catalyzes the coordinated movement of the two tRNA molecules, the mRNA and conformational changes in the ribosome (PubMed:29453282, PubMed:30517857).</text>
</comment>
<comment type="catalytic activity">
    <reaction evidence="11">
        <text>GTP + H2O = GDP + phosphate + H(+)</text>
        <dbReference type="Rhea" id="RHEA:19669"/>
        <dbReference type="ChEBI" id="CHEBI:15377"/>
        <dbReference type="ChEBI" id="CHEBI:15378"/>
        <dbReference type="ChEBI" id="CHEBI:37565"/>
        <dbReference type="ChEBI" id="CHEBI:43474"/>
        <dbReference type="ChEBI" id="CHEBI:58189"/>
    </reaction>
    <physiologicalReaction direction="left-to-right" evidence="11">
        <dbReference type="Rhea" id="RHEA:19670"/>
    </physiologicalReaction>
</comment>
<comment type="subunit">
    <text evidence="2 4 7">Binds to 80S ribosomes (By similarity). Actively translating ribosomes show mutually exclusive binding of eIF5a (EIF5A or EIF5A2) and EEF2/eEF2 (By similarity). Interacts with SERBP1; interaction sequesters EEF2/eEF2 at the A-site of the ribosome, thereby blocking the interaction sites of the mRNA-tRNA complex, promoting ribosome stabilization and hibernation (PubMed:30355441). Interacts with HABP4; interaction takes place at the A-site of hibernating ribosomes and promotes ribosome stabilization (By similarity). Component of the mRNA surveillance SURF complex, at least composed of ERF1, ERF3 (ERF3A or ERF3B), EEF2, UPF1/RENT1, SMG1, SMG8 and SMG9. Interacts with RBPMS2 (By similarity).</text>
</comment>
<comment type="subcellular location">
    <subcellularLocation>
        <location evidence="2">Cytoplasm</location>
    </subcellularLocation>
    <subcellularLocation>
        <location evidence="2">Nucleus</location>
    </subcellularLocation>
    <text evidence="2">Phosphorylation by CSK promotes cleavage and SUMOylation-dependent nuclear translocation of the C-terminal cleavage product.</text>
</comment>
<comment type="PTM">
    <text evidence="2">Phosphorylation by EF-2 kinase completely inactivates EF-2; it requires prior phosphorylation by CDK2 at Ser-595 during mitotic prometaphase. Phosphorylation by CSK promotes SUMOylation, proteolytic cleavage, and nuclear translocation if the C-terminal fragment.</text>
</comment>
<comment type="PTM">
    <text evidence="1">Diphthamide is 2-[3-carboxyamido-3-(trimethyl-ammonio)propyl]histidine (By similarity).</text>
</comment>
<comment type="PTM">
    <text evidence="2">ISGylated.</text>
</comment>
<comment type="PTM">
    <text evidence="2">Proteolytically processed at two sites following phosphorylation by CSK.</text>
</comment>
<comment type="PTM">
    <text evidence="2">SUMOylated following phosphorylation by CSK, promotes proteolytic cleavage.</text>
</comment>
<comment type="similarity">
    <text evidence="10">Belongs to the GTP-binding elongation factor family. EF-G/EF-2 subfamily.</text>
</comment>
<organism>
    <name type="scientific">Oryctolagus cuniculus</name>
    <name type="common">Rabbit</name>
    <dbReference type="NCBI Taxonomy" id="9986"/>
    <lineage>
        <taxon>Eukaryota</taxon>
        <taxon>Metazoa</taxon>
        <taxon>Chordata</taxon>
        <taxon>Craniata</taxon>
        <taxon>Vertebrata</taxon>
        <taxon>Euteleostomi</taxon>
        <taxon>Mammalia</taxon>
        <taxon>Eutheria</taxon>
        <taxon>Euarchontoglires</taxon>
        <taxon>Glires</taxon>
        <taxon>Lagomorpha</taxon>
        <taxon>Leporidae</taxon>
        <taxon>Oryctolagus</taxon>
    </lineage>
</organism>
<gene>
    <name type="primary">EEF2</name>
</gene>
<evidence type="ECO:0000250" key="1">
    <source>
        <dbReference type="UniProtKB" id="P05197"/>
    </source>
</evidence>
<evidence type="ECO:0000250" key="2">
    <source>
        <dbReference type="UniProtKB" id="P13639"/>
    </source>
</evidence>
<evidence type="ECO:0000250" key="3">
    <source>
        <dbReference type="UniProtKB" id="P58252"/>
    </source>
</evidence>
<evidence type="ECO:0000250" key="4">
    <source>
        <dbReference type="UniProtKB" id="Q7ZXP8"/>
    </source>
</evidence>
<evidence type="ECO:0000255" key="5">
    <source>
        <dbReference type="PROSITE-ProRule" id="PRU01059"/>
    </source>
</evidence>
<evidence type="ECO:0000269" key="6">
    <source>
    </source>
</evidence>
<evidence type="ECO:0000269" key="7">
    <source>
    </source>
</evidence>
<evidence type="ECO:0000269" key="8">
    <source>
    </source>
</evidence>
<evidence type="ECO:0000269" key="9">
    <source>
    </source>
</evidence>
<evidence type="ECO:0000305" key="10"/>
<evidence type="ECO:0000305" key="11">
    <source>
    </source>
</evidence>
<evidence type="ECO:0007744" key="12">
    <source>
        <dbReference type="PDB" id="6GZ3"/>
    </source>
</evidence>
<evidence type="ECO:0007744" key="13">
    <source>
        <dbReference type="PDB" id="6GZ4"/>
    </source>
</evidence>
<evidence type="ECO:0007744" key="14">
    <source>
        <dbReference type="PDB" id="6GZ5"/>
    </source>
</evidence>
<reference key="1">
    <citation type="journal article" date="2011" name="Nature">
        <title>A high-resolution map of human evolutionary constraint using 29 mammals.</title>
        <authorList>
            <person name="Lindblad-Toh K."/>
            <person name="Garber M."/>
            <person name="Zuk O."/>
            <person name="Lin M.F."/>
            <person name="Parker B.J."/>
            <person name="Washietl S."/>
            <person name="Kheradpour P."/>
            <person name="Ernst J."/>
            <person name="Jordan G."/>
            <person name="Mauceli E."/>
            <person name="Ward L.D."/>
            <person name="Lowe C.B."/>
            <person name="Holloway A.K."/>
            <person name="Clamp M."/>
            <person name="Gnerre S."/>
            <person name="Alfoldi J."/>
            <person name="Beal K."/>
            <person name="Chang J."/>
            <person name="Clawson H."/>
            <person name="Cuff J."/>
            <person name="Di Palma F."/>
            <person name="Fitzgerald S."/>
            <person name="Flicek P."/>
            <person name="Guttman M."/>
            <person name="Hubisz M.J."/>
            <person name="Jaffe D.B."/>
            <person name="Jungreis I."/>
            <person name="Kent W.J."/>
            <person name="Kostka D."/>
            <person name="Lara M."/>
            <person name="Martins A.L."/>
            <person name="Massingham T."/>
            <person name="Moltke I."/>
            <person name="Raney B.J."/>
            <person name="Rasmussen M.D."/>
            <person name="Robinson J."/>
            <person name="Stark A."/>
            <person name="Vilella A.J."/>
            <person name="Wen J."/>
            <person name="Xie X."/>
            <person name="Zody M.C."/>
            <person name="Baldwin J."/>
            <person name="Bloom T."/>
            <person name="Chin C.W."/>
            <person name="Heiman D."/>
            <person name="Nicol R."/>
            <person name="Nusbaum C."/>
            <person name="Young S."/>
            <person name="Wilkinson J."/>
            <person name="Worley K.C."/>
            <person name="Kovar C.L."/>
            <person name="Muzny D.M."/>
            <person name="Gibbs R.A."/>
            <person name="Cree A."/>
            <person name="Dihn H.H."/>
            <person name="Fowler G."/>
            <person name="Jhangiani S."/>
            <person name="Joshi V."/>
            <person name="Lee S."/>
            <person name="Lewis L.R."/>
            <person name="Nazareth L.V."/>
            <person name="Okwuonu G."/>
            <person name="Santibanez J."/>
            <person name="Warren W.C."/>
            <person name="Mardis E.R."/>
            <person name="Weinstock G.M."/>
            <person name="Wilson R.K."/>
            <person name="Delehaunty K."/>
            <person name="Dooling D."/>
            <person name="Fronik C."/>
            <person name="Fulton L."/>
            <person name="Fulton B."/>
            <person name="Graves T."/>
            <person name="Minx P."/>
            <person name="Sodergren E."/>
            <person name="Birney E."/>
            <person name="Margulies E.H."/>
            <person name="Herrero J."/>
            <person name="Green E.D."/>
            <person name="Haussler D."/>
            <person name="Siepel A."/>
            <person name="Goldman N."/>
            <person name="Pollard K.S."/>
            <person name="Pedersen J.S."/>
            <person name="Lander E.S."/>
            <person name="Kellis M."/>
        </authorList>
    </citation>
    <scope>NUCLEOTIDE SEQUENCE [LARGE SCALE GENOMIC DNA]</scope>
    <source>
        <strain>Thorbecke</strain>
    </source>
</reference>
<reference key="2">
    <citation type="journal article" date="1996" name="Arch. Biochem. Biophys.">
        <title>Cloning and characterization of cDNA encoding the rabbit tRNA-guanine transglycosylase 60-kilodalton subunit.</title>
        <authorList>
            <person name="Deshpande K.L."/>
            <person name="Seubert P.H."/>
            <person name="Tillman D.M."/>
            <person name="Farkas W.R."/>
            <person name="Katze J.R."/>
        </authorList>
    </citation>
    <scope>PROTEIN SEQUENCE OF 2-35</scope>
    <source>
        <strain>New Zealand white</strain>
        <tissue>Liver</tissue>
    </source>
</reference>
<reference key="3">
    <citation type="journal article" date="2018" name="J. Biol. Chem.">
        <title>Eukaryotic translation elongation factor 2 (eEF2) catalyzes reverse translocation of the eukaryotic ribosome.</title>
        <authorList>
            <person name="Susorov D."/>
            <person name="Zakharov N."/>
            <person name="Shuvalova E."/>
            <person name="Ivanov A."/>
            <person name="Egorova T."/>
            <person name="Shuvalov A."/>
            <person name="Shatsky I.N."/>
            <person name="Alkalaeva E."/>
        </authorList>
    </citation>
    <scope>FUNCTION</scope>
</reference>
<reference key="4">
    <citation type="journal article" date="2018" name="Cell Rep.">
        <title>tRNA translocation by the eukaryotic 80S ribosome and the impact of GTP hydrolysis.</title>
        <authorList>
            <person name="Flis J."/>
            <person name="Holm M."/>
            <person name="Rundlet E.J."/>
            <person name="Loerke J."/>
            <person name="Hilal T."/>
            <person name="Dabrowski M."/>
            <person name="Burger J."/>
            <person name="Mielke T."/>
            <person name="Blanchard S.C."/>
            <person name="Spahn C.M.T."/>
            <person name="Budkevich T.V."/>
        </authorList>
    </citation>
    <scope>STRUCTURE BY ELECTRON MICROSCOPY (3.60 ANGSTROMS) OF 5-585 IN COMPLEX WITH RIBOSOME AND NON-HYDROLYZABLE GTP ANALOG GMPPNP</scope>
    <scope>FUNCTION</scope>
    <scope>CATALYTIC ACTIVITY</scope>
</reference>
<reference key="5">
    <citation type="journal article" date="2018" name="Elife">
        <title>Structures of translationally inactive mammalian ribosomes.</title>
        <authorList>
            <person name="Brown A."/>
            <person name="Baird M.R."/>
            <person name="Yip M.C."/>
            <person name="Murray J."/>
            <person name="Shao S."/>
        </authorList>
    </citation>
    <scope>STRUCTURE BY ELECTRON MICROSCOPY (3.30 ANGSTROMS) OF 2-857 IN COMPLEX WITH SERBP1 AND RIBOSOME</scope>
    <scope>INTERACTION WITH SERBP1</scope>
</reference>
<feature type="initiator methionine" description="Removed" evidence="9">
    <location>
        <position position="1"/>
    </location>
</feature>
<feature type="chain" id="PRO_0000091003" description="Elongation factor 2">
    <location>
        <begin position="2"/>
        <end position="857"/>
    </location>
</feature>
<feature type="domain" description="tr-type G" evidence="5">
    <location>
        <begin position="17"/>
        <end position="362"/>
    </location>
</feature>
<feature type="binding site" evidence="11 12 13 14">
    <location>
        <begin position="26"/>
        <end position="33"/>
    </location>
    <ligand>
        <name>GTP</name>
        <dbReference type="ChEBI" id="CHEBI:37565"/>
    </ligand>
</feature>
<feature type="binding site" evidence="11 12 13 14">
    <location>
        <begin position="158"/>
        <end position="161"/>
    </location>
    <ligand>
        <name>GTP</name>
        <dbReference type="ChEBI" id="CHEBI:37565"/>
    </ligand>
</feature>
<feature type="binding site" evidence="11 12 13 14">
    <location>
        <begin position="216"/>
        <end position="218"/>
    </location>
    <ligand>
        <name>GTP</name>
        <dbReference type="ChEBI" id="CHEBI:37565"/>
    </ligand>
</feature>
<feature type="site" description="Cleavage" evidence="2">
    <location>
        <begin position="586"/>
        <end position="587"/>
    </location>
</feature>
<feature type="site" description="Cleavage" evidence="2">
    <location>
        <begin position="605"/>
        <end position="606"/>
    </location>
</feature>
<feature type="modified residue" description="Phosphothreonine" evidence="2">
    <location>
        <position position="54"/>
    </location>
</feature>
<feature type="modified residue" description="Phosphothreonine" evidence="2">
    <location>
        <position position="57"/>
    </location>
</feature>
<feature type="modified residue" description="Phosphothreonine" evidence="2">
    <location>
        <position position="59"/>
    </location>
</feature>
<feature type="modified residue" description="N6-succinyllysine" evidence="3">
    <location>
        <position position="152"/>
    </location>
</feature>
<feature type="modified residue" description="N6-acetyllysine" evidence="2">
    <location>
        <position position="235"/>
    </location>
</feature>
<feature type="modified residue" description="N6-acetyllysine; alternate" evidence="2">
    <location>
        <position position="239"/>
    </location>
</feature>
<feature type="modified residue" description="Phosphotyrosine" evidence="2">
    <location>
        <position position="265"/>
    </location>
</feature>
<feature type="modified residue" description="N6-acetyllysine; alternate" evidence="2">
    <location>
        <position position="272"/>
    </location>
</feature>
<feature type="modified residue" description="N6-succinyllysine; alternate" evidence="3">
    <location>
        <position position="272"/>
    </location>
</feature>
<feature type="modified residue" description="N6-acetyllysine" evidence="2">
    <location>
        <position position="275"/>
    </location>
</feature>
<feature type="modified residue" description="Phosphoserine" evidence="1">
    <location>
        <position position="325"/>
    </location>
</feature>
<feature type="modified residue" description="Phosphotyrosine" evidence="2">
    <location>
        <position position="373"/>
    </location>
</feature>
<feature type="modified residue" description="Phosphothreonine" evidence="2">
    <location>
        <position position="435"/>
    </location>
</feature>
<feature type="modified residue" description="N6-acetyllysine" evidence="3">
    <location>
        <position position="439"/>
    </location>
</feature>
<feature type="modified residue" description="N6-acetyllysine" evidence="2">
    <location>
        <position position="445"/>
    </location>
</feature>
<feature type="modified residue" description="Phosphoserine" evidence="2">
    <location>
        <position position="502"/>
    </location>
</feature>
<feature type="modified residue" description="N6,N6,N6-trimethyllysine" evidence="2">
    <location>
        <position position="525"/>
    </location>
</feature>
<feature type="modified residue" description="N6-succinyllysine" evidence="3">
    <location>
        <position position="572"/>
    </location>
</feature>
<feature type="modified residue" description="Phosphoserine" evidence="2">
    <location>
        <position position="595"/>
    </location>
</feature>
<feature type="modified residue" description="N6-acetyllysine" evidence="3">
    <location>
        <position position="619"/>
    </location>
</feature>
<feature type="modified residue" description="Diphthamide" evidence="1">
    <location>
        <position position="715"/>
    </location>
</feature>
<feature type="cross-link" description="Glycyl lysine isopeptide (Lys-Gly) (interchain with G-Cter in SUMO1); alternate" evidence="2">
    <location>
        <position position="239"/>
    </location>
</feature>
<feature type="cross-link" description="Glycyl lysine isopeptide (Lys-Gly) (interchain with G-Cter in SUMO)" evidence="2">
    <location>
        <position position="322"/>
    </location>
</feature>
<feature type="cross-link" description="Glycyl lysine isopeptide (Lys-Gly) (interchain with G-Cter in SUMO)" evidence="2">
    <location>
        <position position="529"/>
    </location>
</feature>
<feature type="sequence conflict" description="In Ref. 2; AA sequence." evidence="10" ref="2">
    <original>R</original>
    <variation>S</variation>
    <location>
        <position position="10"/>
    </location>
</feature>
<feature type="sequence conflict" description="In Ref. 2; AA sequence." evidence="10" ref="2">
    <original>R</original>
    <variation>S</variation>
    <location>
        <position position="20"/>
    </location>
</feature>
<feature type="sequence conflict" description="In Ref. 2; AA sequence." evidence="10" ref="2">
    <original>HVDH</original>
    <variation>RVDD</variation>
    <location>
        <begin position="27"/>
        <end position="30"/>
    </location>
</feature>
<protein>
    <recommendedName>
        <fullName>Elongation factor 2</fullName>
        <shortName>EF-2</shortName>
        <ecNumber evidence="11">3.6.5.-</ecNumber>
    </recommendedName>
</protein>
<name>EF2_RABIT</name>
<accession>P55823</accession>
<dbReference type="EC" id="3.6.5.-" evidence="11"/>
<dbReference type="PDB" id="6GZ3">
    <property type="method" value="EM"/>
    <property type="resolution" value="3.60 A"/>
    <property type="chains" value="Ct=5-857"/>
</dbReference>
<dbReference type="PDB" id="6GZ4">
    <property type="method" value="EM"/>
    <property type="resolution" value="3.60 A"/>
    <property type="chains" value="Ct=5-857"/>
</dbReference>
<dbReference type="PDB" id="6GZ5">
    <property type="method" value="EM"/>
    <property type="resolution" value="3.50 A"/>
    <property type="chains" value="Ct=5-857"/>
</dbReference>
<dbReference type="PDB" id="6MTD">
    <property type="method" value="EM"/>
    <property type="resolution" value="3.30 A"/>
    <property type="chains" value="v=1-441"/>
</dbReference>
<dbReference type="PDB" id="6MTE">
    <property type="method" value="EM"/>
    <property type="resolution" value="3.40 A"/>
    <property type="chains" value="v=1-441"/>
</dbReference>
<dbReference type="PDBsum" id="6GZ3"/>
<dbReference type="PDBsum" id="6GZ4"/>
<dbReference type="PDBsum" id="6GZ5"/>
<dbReference type="PDBsum" id="6MTD"/>
<dbReference type="PDBsum" id="6MTE"/>
<dbReference type="EMDB" id="EMD-0098"/>
<dbReference type="EMDB" id="EMD-0099"/>
<dbReference type="EMDB" id="EMD-0100"/>
<dbReference type="EMDB" id="EMD-43189"/>
<dbReference type="EMDB" id="EMD-9240"/>
<dbReference type="EMDB" id="EMD-9242"/>
<dbReference type="SMR" id="P55823"/>
<dbReference type="InParanoid" id="P55823"/>
<dbReference type="Proteomes" id="UP000001811">
    <property type="component" value="Unplaced"/>
</dbReference>
<dbReference type="GO" id="GO:0005737">
    <property type="term" value="C:cytoplasm"/>
    <property type="evidence" value="ECO:0000250"/>
    <property type="project" value="UniProtKB"/>
</dbReference>
<dbReference type="GO" id="GO:0005829">
    <property type="term" value="C:cytosol"/>
    <property type="evidence" value="ECO:0007669"/>
    <property type="project" value="TreeGrafter"/>
</dbReference>
<dbReference type="GO" id="GO:0005634">
    <property type="term" value="C:nucleus"/>
    <property type="evidence" value="ECO:0007669"/>
    <property type="project" value="UniProtKB-SubCell"/>
</dbReference>
<dbReference type="GO" id="GO:1990904">
    <property type="term" value="C:ribonucleoprotein complex"/>
    <property type="evidence" value="ECO:0007669"/>
    <property type="project" value="TreeGrafter"/>
</dbReference>
<dbReference type="GO" id="GO:0005525">
    <property type="term" value="F:GTP binding"/>
    <property type="evidence" value="ECO:0007669"/>
    <property type="project" value="UniProtKB-KW"/>
</dbReference>
<dbReference type="GO" id="GO:0003924">
    <property type="term" value="F:GTPase activity"/>
    <property type="evidence" value="ECO:0000314"/>
    <property type="project" value="UniProtKB"/>
</dbReference>
<dbReference type="GO" id="GO:0043022">
    <property type="term" value="F:ribosome binding"/>
    <property type="evidence" value="ECO:0007669"/>
    <property type="project" value="TreeGrafter"/>
</dbReference>
<dbReference type="GO" id="GO:0003746">
    <property type="term" value="F:translation elongation factor activity"/>
    <property type="evidence" value="ECO:0000314"/>
    <property type="project" value="UniProtKB"/>
</dbReference>
<dbReference type="GO" id="GO:0045727">
    <property type="term" value="P:positive regulation of translation"/>
    <property type="evidence" value="ECO:0000315"/>
    <property type="project" value="UniProtKB"/>
</dbReference>
<dbReference type="GO" id="GO:0006414">
    <property type="term" value="P:translational elongation"/>
    <property type="evidence" value="ECO:0000314"/>
    <property type="project" value="UniProtKB"/>
</dbReference>
<dbReference type="CDD" id="cd01681">
    <property type="entry name" value="aeEF2_snRNP_like_IV"/>
    <property type="match status" value="1"/>
</dbReference>
<dbReference type="CDD" id="cd04096">
    <property type="entry name" value="eEF2_snRNP_like_C"/>
    <property type="match status" value="1"/>
</dbReference>
<dbReference type="CDD" id="cd01885">
    <property type="entry name" value="EF2"/>
    <property type="match status" value="1"/>
</dbReference>
<dbReference type="CDD" id="cd16261">
    <property type="entry name" value="EF2_snRNP_III"/>
    <property type="match status" value="1"/>
</dbReference>
<dbReference type="CDD" id="cd03700">
    <property type="entry name" value="EF2_snRNP_like_II"/>
    <property type="match status" value="1"/>
</dbReference>
<dbReference type="FunFam" id="2.40.30.10:FF:000010">
    <property type="entry name" value="Translation elongation factor 2"/>
    <property type="match status" value="1"/>
</dbReference>
<dbReference type="FunFam" id="3.30.230.10:FF:000006">
    <property type="entry name" value="Translation elongation factor 2"/>
    <property type="match status" value="1"/>
</dbReference>
<dbReference type="FunFam" id="3.30.70.240:FF:000003">
    <property type="entry name" value="Translation elongation factor 2"/>
    <property type="match status" value="1"/>
</dbReference>
<dbReference type="FunFam" id="3.30.70.870:FF:000002">
    <property type="entry name" value="Translation elongation factor 2"/>
    <property type="match status" value="1"/>
</dbReference>
<dbReference type="FunFam" id="3.40.50.300:FF:000058">
    <property type="entry name" value="Translation elongation factor 2"/>
    <property type="match status" value="1"/>
</dbReference>
<dbReference type="Gene3D" id="3.30.230.10">
    <property type="match status" value="1"/>
</dbReference>
<dbReference type="Gene3D" id="3.30.70.240">
    <property type="match status" value="1"/>
</dbReference>
<dbReference type="Gene3D" id="3.30.70.870">
    <property type="entry name" value="Elongation Factor G (Translational Gtpase), domain 3"/>
    <property type="match status" value="1"/>
</dbReference>
<dbReference type="Gene3D" id="3.40.50.300">
    <property type="entry name" value="P-loop containing nucleotide triphosphate hydrolases"/>
    <property type="match status" value="1"/>
</dbReference>
<dbReference type="Gene3D" id="2.40.30.10">
    <property type="entry name" value="Translation factors"/>
    <property type="match status" value="1"/>
</dbReference>
<dbReference type="InterPro" id="IPR041095">
    <property type="entry name" value="EFG_II"/>
</dbReference>
<dbReference type="InterPro" id="IPR035647">
    <property type="entry name" value="EFG_III/V"/>
</dbReference>
<dbReference type="InterPro" id="IPR000640">
    <property type="entry name" value="EFG_V-like"/>
</dbReference>
<dbReference type="InterPro" id="IPR004161">
    <property type="entry name" value="EFTu-like_2"/>
</dbReference>
<dbReference type="InterPro" id="IPR031157">
    <property type="entry name" value="G_TR_CS"/>
</dbReference>
<dbReference type="InterPro" id="IPR027417">
    <property type="entry name" value="P-loop_NTPase"/>
</dbReference>
<dbReference type="InterPro" id="IPR020568">
    <property type="entry name" value="Ribosomal_Su5_D2-typ_SF"/>
</dbReference>
<dbReference type="InterPro" id="IPR014721">
    <property type="entry name" value="Ribsml_uS5_D2-typ_fold_subgr"/>
</dbReference>
<dbReference type="InterPro" id="IPR005225">
    <property type="entry name" value="Small_GTP-bd"/>
</dbReference>
<dbReference type="InterPro" id="IPR000795">
    <property type="entry name" value="T_Tr_GTP-bd_dom"/>
</dbReference>
<dbReference type="InterPro" id="IPR009000">
    <property type="entry name" value="Transl_B-barrel_sf"/>
</dbReference>
<dbReference type="InterPro" id="IPR005517">
    <property type="entry name" value="Transl_elong_EFG/EF2_IV"/>
</dbReference>
<dbReference type="NCBIfam" id="TIGR00231">
    <property type="entry name" value="small_GTP"/>
    <property type="match status" value="1"/>
</dbReference>
<dbReference type="PANTHER" id="PTHR42908:SF35">
    <property type="entry name" value="ELONGATION FACTOR 2"/>
    <property type="match status" value="1"/>
</dbReference>
<dbReference type="PANTHER" id="PTHR42908">
    <property type="entry name" value="TRANSLATION ELONGATION FACTOR-RELATED"/>
    <property type="match status" value="1"/>
</dbReference>
<dbReference type="Pfam" id="PF00679">
    <property type="entry name" value="EFG_C"/>
    <property type="match status" value="1"/>
</dbReference>
<dbReference type="Pfam" id="PF14492">
    <property type="entry name" value="EFG_III"/>
    <property type="match status" value="1"/>
</dbReference>
<dbReference type="Pfam" id="PF03764">
    <property type="entry name" value="EFG_IV"/>
    <property type="match status" value="1"/>
</dbReference>
<dbReference type="Pfam" id="PF00009">
    <property type="entry name" value="GTP_EFTU"/>
    <property type="match status" value="1"/>
</dbReference>
<dbReference type="Pfam" id="PF03144">
    <property type="entry name" value="GTP_EFTU_D2"/>
    <property type="match status" value="1"/>
</dbReference>
<dbReference type="PRINTS" id="PR00315">
    <property type="entry name" value="ELONGATNFCT"/>
</dbReference>
<dbReference type="SMART" id="SM00838">
    <property type="entry name" value="EFG_C"/>
    <property type="match status" value="1"/>
</dbReference>
<dbReference type="SMART" id="SM00889">
    <property type="entry name" value="EFG_IV"/>
    <property type="match status" value="1"/>
</dbReference>
<dbReference type="SUPFAM" id="SSF54980">
    <property type="entry name" value="EF-G C-terminal domain-like"/>
    <property type="match status" value="2"/>
</dbReference>
<dbReference type="SUPFAM" id="SSF52540">
    <property type="entry name" value="P-loop containing nucleoside triphosphate hydrolases"/>
    <property type="match status" value="1"/>
</dbReference>
<dbReference type="SUPFAM" id="SSF54211">
    <property type="entry name" value="Ribosomal protein S5 domain 2-like"/>
    <property type="match status" value="1"/>
</dbReference>
<dbReference type="SUPFAM" id="SSF50447">
    <property type="entry name" value="Translation proteins"/>
    <property type="match status" value="1"/>
</dbReference>
<dbReference type="PROSITE" id="PS00301">
    <property type="entry name" value="G_TR_1"/>
    <property type="match status" value="1"/>
</dbReference>
<dbReference type="PROSITE" id="PS51722">
    <property type="entry name" value="G_TR_2"/>
    <property type="match status" value="1"/>
</dbReference>